<accession>P51158</accession>
<dbReference type="EC" id="3.6.5.2" evidence="2"/>
<dbReference type="EMBL" id="X78606">
    <property type="protein sequence ID" value="CAA55340.1"/>
    <property type="molecule type" value="mRNA"/>
</dbReference>
<dbReference type="PIR" id="S65476">
    <property type="entry name" value="S65476"/>
</dbReference>
<dbReference type="RefSeq" id="NP_446430.1">
    <property type="nucleotide sequence ID" value="NM_053978.1"/>
</dbReference>
<dbReference type="SMR" id="P51158"/>
<dbReference type="FunCoup" id="P51158">
    <property type="interactions" value="2095"/>
</dbReference>
<dbReference type="STRING" id="10116.ENSRNOP00000071725"/>
<dbReference type="iPTMnet" id="P51158"/>
<dbReference type="PhosphoSitePlus" id="P51158"/>
<dbReference type="PaxDb" id="10116-ENSRNOP00000050260"/>
<dbReference type="Ensembl" id="ENSRNOT00000081033.2">
    <property type="protein sequence ID" value="ENSRNOP00000071725.1"/>
    <property type="gene ID" value="ENSRNOG00000017074.8"/>
</dbReference>
<dbReference type="GeneID" id="117049"/>
<dbReference type="KEGG" id="rno:117049"/>
<dbReference type="AGR" id="RGD:620891"/>
<dbReference type="CTD" id="9364"/>
<dbReference type="RGD" id="620891">
    <property type="gene designation" value="Rab28"/>
</dbReference>
<dbReference type="eggNOG" id="KOG0078">
    <property type="taxonomic scope" value="Eukaryota"/>
</dbReference>
<dbReference type="GeneTree" id="ENSGT00940000161833"/>
<dbReference type="HOGENOM" id="CLU_041217_10_4_1"/>
<dbReference type="InParanoid" id="P51158"/>
<dbReference type="OMA" id="YKNVNLH"/>
<dbReference type="OrthoDB" id="6585768at2759"/>
<dbReference type="PhylomeDB" id="P51158"/>
<dbReference type="TreeFam" id="TF313852"/>
<dbReference type="PRO" id="PR:P51158"/>
<dbReference type="Proteomes" id="UP000002494">
    <property type="component" value="Chromosome 14"/>
</dbReference>
<dbReference type="Bgee" id="ENSRNOG00000017074">
    <property type="expression patterns" value="Expressed in quadriceps femoris and 20 other cell types or tissues"/>
</dbReference>
<dbReference type="ExpressionAtlas" id="P51158">
    <property type="expression patterns" value="baseline and differential"/>
</dbReference>
<dbReference type="GO" id="GO:0036064">
    <property type="term" value="C:ciliary basal body"/>
    <property type="evidence" value="ECO:0000314"/>
    <property type="project" value="UniProtKB"/>
</dbReference>
<dbReference type="GO" id="GO:0035253">
    <property type="term" value="C:ciliary rootlet"/>
    <property type="evidence" value="ECO:0000314"/>
    <property type="project" value="UniProtKB"/>
</dbReference>
<dbReference type="GO" id="GO:0005737">
    <property type="term" value="C:cytoplasm"/>
    <property type="evidence" value="ECO:0007669"/>
    <property type="project" value="UniProtKB-KW"/>
</dbReference>
<dbReference type="GO" id="GO:0012505">
    <property type="term" value="C:endomembrane system"/>
    <property type="evidence" value="ECO:0000318"/>
    <property type="project" value="GO_Central"/>
</dbReference>
<dbReference type="GO" id="GO:0005886">
    <property type="term" value="C:plasma membrane"/>
    <property type="evidence" value="ECO:0007669"/>
    <property type="project" value="UniProtKB-SubCell"/>
</dbReference>
<dbReference type="GO" id="GO:0003925">
    <property type="term" value="F:G protein activity"/>
    <property type="evidence" value="ECO:0000250"/>
    <property type="project" value="UniProtKB"/>
</dbReference>
<dbReference type="GO" id="GO:0019003">
    <property type="term" value="F:GDP binding"/>
    <property type="evidence" value="ECO:0000250"/>
    <property type="project" value="UniProtKB"/>
</dbReference>
<dbReference type="GO" id="GO:0005525">
    <property type="term" value="F:GTP binding"/>
    <property type="evidence" value="ECO:0000314"/>
    <property type="project" value="RGD"/>
</dbReference>
<dbReference type="GO" id="GO:0003924">
    <property type="term" value="F:GTPase activity"/>
    <property type="evidence" value="ECO:0000318"/>
    <property type="project" value="GO_Central"/>
</dbReference>
<dbReference type="GO" id="GO:0006886">
    <property type="term" value="P:intracellular protein transport"/>
    <property type="evidence" value="ECO:0000318"/>
    <property type="project" value="GO_Central"/>
</dbReference>
<dbReference type="CDD" id="cd04109">
    <property type="entry name" value="Rab28"/>
    <property type="match status" value="1"/>
</dbReference>
<dbReference type="FunFam" id="3.40.50.300:FF:000513">
    <property type="entry name" value="ras-related protein Rab-28 isoform X2"/>
    <property type="match status" value="1"/>
</dbReference>
<dbReference type="Gene3D" id="3.40.50.300">
    <property type="entry name" value="P-loop containing nucleotide triphosphate hydrolases"/>
    <property type="match status" value="1"/>
</dbReference>
<dbReference type="InterPro" id="IPR027417">
    <property type="entry name" value="P-loop_NTPase"/>
</dbReference>
<dbReference type="InterPro" id="IPR005225">
    <property type="entry name" value="Small_GTP-bd"/>
</dbReference>
<dbReference type="InterPro" id="IPR001806">
    <property type="entry name" value="Small_GTPase"/>
</dbReference>
<dbReference type="NCBIfam" id="TIGR00231">
    <property type="entry name" value="small_GTP"/>
    <property type="match status" value="1"/>
</dbReference>
<dbReference type="PANTHER" id="PTHR47978">
    <property type="match status" value="1"/>
</dbReference>
<dbReference type="Pfam" id="PF00071">
    <property type="entry name" value="Ras"/>
    <property type="match status" value="1"/>
</dbReference>
<dbReference type="PRINTS" id="PR00449">
    <property type="entry name" value="RASTRNSFRMNG"/>
</dbReference>
<dbReference type="SMART" id="SM00175">
    <property type="entry name" value="RAB"/>
    <property type="match status" value="1"/>
</dbReference>
<dbReference type="SMART" id="SM00176">
    <property type="entry name" value="RAN"/>
    <property type="match status" value="1"/>
</dbReference>
<dbReference type="SMART" id="SM00173">
    <property type="entry name" value="RAS"/>
    <property type="match status" value="1"/>
</dbReference>
<dbReference type="SMART" id="SM00174">
    <property type="entry name" value="RHO"/>
    <property type="match status" value="1"/>
</dbReference>
<dbReference type="SUPFAM" id="SSF52540">
    <property type="entry name" value="P-loop containing nucleoside triphosphate hydrolases"/>
    <property type="match status" value="1"/>
</dbReference>
<dbReference type="PROSITE" id="PS51419">
    <property type="entry name" value="RAB"/>
    <property type="match status" value="1"/>
</dbReference>
<evidence type="ECO:0000250" key="1"/>
<evidence type="ECO:0000250" key="2">
    <source>
        <dbReference type="UniProtKB" id="P51157"/>
    </source>
</evidence>
<evidence type="ECO:0000250" key="3">
    <source>
        <dbReference type="UniProtKB" id="P62820"/>
    </source>
</evidence>
<evidence type="ECO:0000250" key="4">
    <source>
        <dbReference type="UniProtKB" id="Q3SWY9"/>
    </source>
</evidence>
<evidence type="ECO:0000250" key="5">
    <source>
        <dbReference type="UniProtKB" id="Q99KL7"/>
    </source>
</evidence>
<evidence type="ECO:0000255" key="6">
    <source>
        <dbReference type="PROSITE-ProRule" id="PRU00753"/>
    </source>
</evidence>
<evidence type="ECO:0000269" key="7">
    <source>
    </source>
</evidence>
<evidence type="ECO:0000269" key="8">
    <source>
    </source>
</evidence>
<evidence type="ECO:0000305" key="9"/>
<evidence type="ECO:0000312" key="10">
    <source>
        <dbReference type="RGD" id="620891"/>
    </source>
</evidence>
<reference key="1">
    <citation type="journal article" date="1996" name="Eur. J. Biochem.">
        <title>Alternative mRNA splicing of the novel GTPase Rab28 generates isoforms with different C-termini.</title>
        <authorList>
            <person name="Brauers A."/>
            <person name="Schuermann A."/>
            <person name="Massmann S."/>
            <person name="Muehl-Zuerbes P."/>
            <person name="Becker W."/>
            <person name="Kainulainen H."/>
            <person name="Lie C."/>
            <person name="Joost H.-G."/>
        </authorList>
    </citation>
    <scope>NUCLEOTIDE SEQUENCE [MRNA]</scope>
    <source>
        <strain>Sprague-Dawley</strain>
        <tissue>Brain</tissue>
    </source>
</reference>
<reference key="2">
    <citation type="journal article" date="2013" name="Am. J. Hum. Genet.">
        <title>Mutations in RAB28, encoding a farnesylated small GTPase, are associated with autosomal-recessive cone-rod dystrophy.</title>
        <authorList>
            <consortium name="European Retinal Disease Consortium"/>
            <person name="Roosing S."/>
            <person name="Rohrschneider K."/>
            <person name="Beryozkin A."/>
            <person name="Sharon D."/>
            <person name="Weisschuh N."/>
            <person name="Staller J."/>
            <person name="Kohl S."/>
            <person name="Zelinger L."/>
            <person name="Peters T.A."/>
            <person name="Neveling K."/>
            <person name="Strom T.M."/>
            <person name="van den Born L.I."/>
            <person name="Hoyng C.B."/>
            <person name="Klaver C.C."/>
            <person name="Roepman R."/>
            <person name="Wissinger B."/>
            <person name="Banin E."/>
            <person name="Cremers F.P."/>
            <person name="den Hollander A.I."/>
        </authorList>
    </citation>
    <scope>SUBCELLULAR LOCATION</scope>
    <scope>TISSUE SPECIFICITY</scope>
</reference>
<reference key="3">
    <citation type="journal article" date="2013" name="PLoS ONE">
        <title>Involvement of Rab28 in NF-kappaB nuclear transport in endothelial cells.</title>
        <authorList>
            <person name="Jiang J."/>
            <person name="Qi Y.X."/>
            <person name="Zhang P."/>
            <person name="Gu W.T."/>
            <person name="Yan Z.Q."/>
            <person name="Shen B.R."/>
            <person name="Yao Q.P."/>
            <person name="Kong H."/>
            <person name="Chien S."/>
            <person name="Jiang Z.L."/>
        </authorList>
    </citation>
    <scope>FUNCTION</scope>
    <scope>INTERACTION WITH RELA</scope>
    <scope>SUBCELLULAR LOCATION</scope>
</reference>
<organism>
    <name type="scientific">Rattus norvegicus</name>
    <name type="common">Rat</name>
    <dbReference type="NCBI Taxonomy" id="10116"/>
    <lineage>
        <taxon>Eukaryota</taxon>
        <taxon>Metazoa</taxon>
        <taxon>Chordata</taxon>
        <taxon>Craniata</taxon>
        <taxon>Vertebrata</taxon>
        <taxon>Euteleostomi</taxon>
        <taxon>Mammalia</taxon>
        <taxon>Eutheria</taxon>
        <taxon>Euarchontoglires</taxon>
        <taxon>Glires</taxon>
        <taxon>Rodentia</taxon>
        <taxon>Myomorpha</taxon>
        <taxon>Muroidea</taxon>
        <taxon>Muridae</taxon>
        <taxon>Murinae</taxon>
        <taxon>Rattus</taxon>
    </lineage>
</organism>
<gene>
    <name evidence="10" type="primary">Rab28</name>
</gene>
<comment type="function">
    <text evidence="2 5 7">The small GTPases Rab are key regulators of intracellular membrane trafficking, from the formation of transport vesicles to their fusion with membranes. Rabs cycle between an inactive GDP-bound form and an active GTP-bound form that is able to recruit to membranes different sets of downstream effectors directly responsible for vesicle formation, movement, tethering and fusion (By similarity). RAB28 is required for shedding and phagocytosis of cone cell outer segments (OS) discs in the retina (By similarity). Also participates in nuclear factor kappa-B p65/RELA nuclear transport in endothelial cells (PubMed:23457503).</text>
</comment>
<comment type="catalytic activity">
    <reaction evidence="2">
        <text>GTP + H2O = GDP + phosphate + H(+)</text>
        <dbReference type="Rhea" id="RHEA:19669"/>
        <dbReference type="ChEBI" id="CHEBI:15377"/>
        <dbReference type="ChEBI" id="CHEBI:15378"/>
        <dbReference type="ChEBI" id="CHEBI:37565"/>
        <dbReference type="ChEBI" id="CHEBI:43474"/>
        <dbReference type="ChEBI" id="CHEBI:58189"/>
        <dbReference type="EC" id="3.6.5.2"/>
    </reaction>
    <physiologicalReaction direction="left-to-right" evidence="2">
        <dbReference type="Rhea" id="RHEA:19670"/>
    </physiologicalReaction>
</comment>
<comment type="cofactor">
    <cofactor evidence="2">
        <name>Mg(2+)</name>
        <dbReference type="ChEBI" id="CHEBI:18420"/>
    </cofactor>
</comment>
<comment type="activity regulation">
    <text evidence="2">Regulated by guanine nucleotide exchange factors (GEFs) which promote the exchange of bound GDP for free GTP. Regulated by GTPase activating proteins (GAPs) which increase the GTP hydrolysis activity. Inhibited by GDP dissociation inhibitors (GDIs).</text>
</comment>
<comment type="subunit">
    <text evidence="4 7">Interacts (prenylated form) with PDE6D; the interaction promotes RAB28 delivery to the photoreceptor outer segments. Interacts with KCNJ13; the interaction may facilitate cone outer segments phagocytosis (By similarity). Interacts with RELA; the interaction contributes to RELA transport from cytoplasm to nucleus (PubMed:23457503).</text>
</comment>
<comment type="subcellular location">
    <subcellularLocation>
        <location evidence="9">Cell membrane</location>
        <topology evidence="9">Lipid-anchor</topology>
        <orientation evidence="9">Cytoplasmic side</orientation>
    </subcellularLocation>
    <subcellularLocation>
        <location evidence="8">Cytoplasm</location>
        <location evidence="8">Cytoskeleton</location>
        <location evidence="8">Cilium basal body</location>
    </subcellularLocation>
    <subcellularLocation>
        <location evidence="7">Cytoplasm</location>
    </subcellularLocation>
    <subcellularLocation>
        <location evidence="7">Nucleus</location>
    </subcellularLocation>
    <text evidence="7 8">Expressed in the basal body and ciliary rootlet of the photoreceptors (PubMed:23746546). Localized in the cytoplasm and the nucleus of vascular endothelial cells (PubMed:23457503).</text>
</comment>
<comment type="tissue specificity">
    <text evidence="8">Testis, brain, and to much lower levels heart, skeletal muscle and fat cells. Expressed in the retina.</text>
</comment>
<comment type="domain">
    <text evidence="2">Switch I, switch II and the interswitch regions are characteristic of Rab GTPases and mediate the interactions with Rab downstream effectors. The switch regions undergo conformational changes upon nucleotide binding which drive interaction with specific sets of effector proteins, with most effectors only binding to GTP-bound Rab.</text>
</comment>
<comment type="PTM">
    <text evidence="2">Isoprenylated.</text>
</comment>
<comment type="similarity">
    <text evidence="9">Belongs to the small GTPase superfamily. Rab family.</text>
</comment>
<feature type="initiator methionine" description="Removed" evidence="2">
    <location>
        <position position="1"/>
    </location>
</feature>
<feature type="chain" id="PRO_0000121229" description="Ras-related protein Rab-28">
    <location>
        <begin position="2"/>
        <end position="218"/>
    </location>
</feature>
<feature type="propeptide" id="PRO_0000396724" description="Removed in mature form" evidence="1">
    <location>
        <begin position="219"/>
        <end position="221"/>
    </location>
</feature>
<feature type="region of interest" description="Switch I" evidence="6">
    <location>
        <begin position="35"/>
        <end position="49"/>
    </location>
</feature>
<feature type="region of interest" description="Switch II" evidence="6">
    <location>
        <begin position="68"/>
        <end position="85"/>
    </location>
</feature>
<feature type="binding site" evidence="2">
    <location>
        <position position="21"/>
    </location>
    <ligand>
        <name>GTP</name>
        <dbReference type="ChEBI" id="CHEBI:37565"/>
    </ligand>
</feature>
<feature type="binding site" evidence="2">
    <location>
        <position position="24"/>
    </location>
    <ligand>
        <name>GTP</name>
        <dbReference type="ChEBI" id="CHEBI:37565"/>
    </ligand>
</feature>
<feature type="binding site" evidence="2">
    <location>
        <position position="25"/>
    </location>
    <ligand>
        <name>GTP</name>
        <dbReference type="ChEBI" id="CHEBI:37565"/>
    </ligand>
</feature>
<feature type="binding site" evidence="2">
    <location>
        <position position="26"/>
    </location>
    <ligand>
        <name>GTP</name>
        <dbReference type="ChEBI" id="CHEBI:37565"/>
    </ligand>
</feature>
<feature type="binding site" evidence="3">
    <location>
        <position position="26"/>
    </location>
    <ligand>
        <name>Mg(2+)</name>
        <dbReference type="ChEBI" id="CHEBI:18420"/>
    </ligand>
</feature>
<feature type="binding site" evidence="2">
    <location>
        <position position="27"/>
    </location>
    <ligand>
        <name>GTP</name>
        <dbReference type="ChEBI" id="CHEBI:37565"/>
    </ligand>
</feature>
<feature type="binding site" evidence="2">
    <location>
        <position position="38"/>
    </location>
    <ligand>
        <name>GTP</name>
        <dbReference type="ChEBI" id="CHEBI:37565"/>
    </ligand>
</feature>
<feature type="binding site" evidence="2">
    <location>
        <position position="39"/>
    </location>
    <ligand>
        <name>GTP</name>
        <dbReference type="ChEBI" id="CHEBI:37565"/>
    </ligand>
</feature>
<feature type="binding site" evidence="2">
    <location>
        <position position="41"/>
    </location>
    <ligand>
        <name>GTP</name>
        <dbReference type="ChEBI" id="CHEBI:37565"/>
    </ligand>
</feature>
<feature type="binding site" evidence="2">
    <location>
        <position position="44"/>
    </location>
    <ligand>
        <name>GTP</name>
        <dbReference type="ChEBI" id="CHEBI:37565"/>
    </ligand>
</feature>
<feature type="binding site" evidence="3">
    <location>
        <position position="44"/>
    </location>
    <ligand>
        <name>Mg(2+)</name>
        <dbReference type="ChEBI" id="CHEBI:18420"/>
    </ligand>
</feature>
<feature type="binding site" evidence="3">
    <location>
        <position position="68"/>
    </location>
    <ligand>
        <name>Mg(2+)</name>
        <dbReference type="ChEBI" id="CHEBI:18420"/>
    </ligand>
</feature>
<feature type="binding site" evidence="2">
    <location>
        <position position="71"/>
    </location>
    <ligand>
        <name>GTP</name>
        <dbReference type="ChEBI" id="CHEBI:37565"/>
    </ligand>
</feature>
<feature type="binding site" evidence="2">
    <location>
        <position position="129"/>
    </location>
    <ligand>
        <name>GTP</name>
        <dbReference type="ChEBI" id="CHEBI:37565"/>
    </ligand>
</feature>
<feature type="binding site" evidence="2">
    <location>
        <position position="130"/>
    </location>
    <ligand>
        <name>GTP</name>
        <dbReference type="ChEBI" id="CHEBI:37565"/>
    </ligand>
</feature>
<feature type="binding site" evidence="2">
    <location>
        <position position="132"/>
    </location>
    <ligand>
        <name>GTP</name>
        <dbReference type="ChEBI" id="CHEBI:37565"/>
    </ligand>
</feature>
<feature type="binding site" evidence="2">
    <location>
        <position position="160"/>
    </location>
    <ligand>
        <name>GTP</name>
        <dbReference type="ChEBI" id="CHEBI:37565"/>
    </ligand>
</feature>
<feature type="binding site" evidence="2">
    <location>
        <position position="161"/>
    </location>
    <ligand>
        <name>GTP</name>
        <dbReference type="ChEBI" id="CHEBI:37565"/>
    </ligand>
</feature>
<feature type="modified residue" description="N-acetylserine" evidence="2">
    <location>
        <position position="2"/>
    </location>
</feature>
<feature type="modified residue" description="Phosphoserine" evidence="2">
    <location>
        <position position="8"/>
    </location>
</feature>
<feature type="modified residue" description="Cysteine methyl ester" evidence="1">
    <location>
        <position position="218"/>
    </location>
</feature>
<feature type="lipid moiety-binding region" description="S-farnesyl cysteine" evidence="1">
    <location>
        <position position="218"/>
    </location>
</feature>
<keyword id="KW-0007">Acetylation</keyword>
<keyword id="KW-1003">Cell membrane</keyword>
<keyword id="KW-0966">Cell projection</keyword>
<keyword id="KW-0963">Cytoplasm</keyword>
<keyword id="KW-0206">Cytoskeleton</keyword>
<keyword id="KW-0342">GTP-binding</keyword>
<keyword id="KW-0378">Hydrolase</keyword>
<keyword id="KW-0449">Lipoprotein</keyword>
<keyword id="KW-0460">Magnesium</keyword>
<keyword id="KW-0472">Membrane</keyword>
<keyword id="KW-0479">Metal-binding</keyword>
<keyword id="KW-0488">Methylation</keyword>
<keyword id="KW-0547">Nucleotide-binding</keyword>
<keyword id="KW-0539">Nucleus</keyword>
<keyword id="KW-0597">Phosphoprotein</keyword>
<keyword id="KW-0636">Prenylation</keyword>
<keyword id="KW-1185">Reference proteome</keyword>
<name>RAB28_RAT</name>
<sequence length="221" mass="24772">MSDSEEESQDRQLKIVVLGDGTSGKTSLATCFAQETFGKQYKQTIGLDFFLRRITLPGNLNVTLQVWDIGGQTIGGKMLDKYIYGAQGILLVYDITNYQSFENLEDWYSVVKTVSEESETQPLVALVGNKIDLEHMRTVKPDKHLRFCQENGFSSHFVSAKTGDSVFLCFQKVAAEILGIKLNKAEIEQSQRVVKADIVNYNQEPMSRTVNPPRSSMCAVQ</sequence>
<protein>
    <recommendedName>
        <fullName>Ras-related protein Rab-28</fullName>
        <ecNumber evidence="2">3.6.5.2</ecNumber>
    </recommendedName>
</protein>
<proteinExistence type="evidence at protein level"/>